<protein>
    <recommendedName>
        <fullName>Surface glycoprotein CD59 homolog</fullName>
    </recommendedName>
</protein>
<comment type="subcellular location">
    <subcellularLocation>
        <location evidence="1">Host cell membrane</location>
        <topology evidence="1">Lipid-anchor</topology>
        <topology evidence="1">GPI-anchor</topology>
    </subcellularLocation>
</comment>
<accession>Q00996</accession>
<organism>
    <name type="scientific">Saimiriine herpesvirus 2 (strain 11)</name>
    <name type="common">SaHV-2</name>
    <name type="synonym">Herpesvirus saimiri</name>
    <dbReference type="NCBI Taxonomy" id="10383"/>
    <lineage>
        <taxon>Viruses</taxon>
        <taxon>Duplodnaviria</taxon>
        <taxon>Heunggongvirae</taxon>
        <taxon>Peploviricota</taxon>
        <taxon>Herviviricetes</taxon>
        <taxon>Herpesvirales</taxon>
        <taxon>Orthoherpesviridae</taxon>
        <taxon>Gammaherpesvirinae</taxon>
        <taxon>Rhadinovirus</taxon>
        <taxon>Rhadinovirus saimiriinegamma2</taxon>
        <taxon>Saimiriine herpesvirus 2</taxon>
    </lineage>
</organism>
<reference key="1">
    <citation type="journal article" date="1992" name="J. Virol.">
        <title>Primary structure of the herpesvirus saimiri genome.</title>
        <authorList>
            <person name="Albrecht J.-C."/>
            <person name="Nicholas J."/>
            <person name="Biller D."/>
            <person name="Cameron K.R."/>
            <person name="Biesinger B."/>
            <person name="Newman C."/>
            <person name="Wittmann S."/>
            <person name="Craxton M.A."/>
            <person name="Coleman H."/>
            <person name="Fleckenstein B."/>
            <person name="Honess R.W."/>
        </authorList>
    </citation>
    <scope>NUCLEOTIDE SEQUENCE [LARGE SCALE GENOMIC DNA]</scope>
</reference>
<reference key="2">
    <citation type="journal article" date="1992" name="Virology">
        <title>Herpesvirus saimiri has a gene specifying a homologue of the cellular membrane glycoprotein CD59.</title>
        <authorList>
            <person name="Albrecht J.-C."/>
            <person name="Nicolas J."/>
            <person name="Cameron K.R."/>
            <person name="Newman C."/>
            <person name="Fleckenstein B."/>
            <person name="Honess R.W."/>
        </authorList>
    </citation>
    <scope>SIMILARITY TO CD59</scope>
</reference>
<dbReference type="EMBL" id="X64346">
    <property type="protein sequence ID" value="CAA45638.1"/>
    <property type="molecule type" value="Genomic_DNA"/>
</dbReference>
<dbReference type="EMBL" id="X64273">
    <property type="protein sequence ID" value="CAA45565.1"/>
    <property type="molecule type" value="Genomic_DNA"/>
</dbReference>
<dbReference type="RefSeq" id="NP_040217.1">
    <property type="nucleotide sequence ID" value="NC_001350.1"/>
</dbReference>
<dbReference type="SMR" id="Q00996"/>
<dbReference type="GlyCosmos" id="Q00996">
    <property type="glycosylation" value="1 site, No reported glycans"/>
</dbReference>
<dbReference type="KEGG" id="vg:1682506"/>
<dbReference type="Proteomes" id="UP000000587">
    <property type="component" value="Segment"/>
</dbReference>
<dbReference type="GO" id="GO:0020002">
    <property type="term" value="C:host cell plasma membrane"/>
    <property type="evidence" value="ECO:0007669"/>
    <property type="project" value="UniProtKB-SubCell"/>
</dbReference>
<dbReference type="GO" id="GO:0005886">
    <property type="term" value="C:plasma membrane"/>
    <property type="evidence" value="ECO:0007669"/>
    <property type="project" value="TreeGrafter"/>
</dbReference>
<dbReference type="GO" id="GO:0098552">
    <property type="term" value="C:side of membrane"/>
    <property type="evidence" value="ECO:0007669"/>
    <property type="project" value="UniProtKB-KW"/>
</dbReference>
<dbReference type="GO" id="GO:0001848">
    <property type="term" value="F:complement binding"/>
    <property type="evidence" value="ECO:0007669"/>
    <property type="project" value="TreeGrafter"/>
</dbReference>
<dbReference type="GO" id="GO:0001971">
    <property type="term" value="P:negative regulation of activation of membrane attack complex"/>
    <property type="evidence" value="ECO:0007669"/>
    <property type="project" value="TreeGrafter"/>
</dbReference>
<dbReference type="CDD" id="cd23554">
    <property type="entry name" value="TFP_LU_ECD_CD59"/>
    <property type="match status" value="1"/>
</dbReference>
<dbReference type="Gene3D" id="2.10.60.10">
    <property type="entry name" value="CD59"/>
    <property type="match status" value="1"/>
</dbReference>
<dbReference type="InterPro" id="IPR056949">
    <property type="entry name" value="CD59"/>
</dbReference>
<dbReference type="InterPro" id="IPR018363">
    <property type="entry name" value="CD59_antigen_CS"/>
</dbReference>
<dbReference type="InterPro" id="IPR016054">
    <property type="entry name" value="LY6_UPA_recep-like"/>
</dbReference>
<dbReference type="InterPro" id="IPR045860">
    <property type="entry name" value="Snake_toxin-like_sf"/>
</dbReference>
<dbReference type="PANTHER" id="PTHR10036">
    <property type="entry name" value="CD59 GLYCOPROTEIN"/>
    <property type="match status" value="1"/>
</dbReference>
<dbReference type="PANTHER" id="PTHR10036:SF24">
    <property type="entry name" value="CD59 GLYCOPROTEIN"/>
    <property type="match status" value="1"/>
</dbReference>
<dbReference type="Pfam" id="PF25152">
    <property type="entry name" value="CD59"/>
    <property type="match status" value="1"/>
</dbReference>
<dbReference type="SMART" id="SM00134">
    <property type="entry name" value="LU"/>
    <property type="match status" value="1"/>
</dbReference>
<dbReference type="SUPFAM" id="SSF57302">
    <property type="entry name" value="Snake toxin-like"/>
    <property type="match status" value="1"/>
</dbReference>
<dbReference type="PROSITE" id="PS00983">
    <property type="entry name" value="LY6_UPAR"/>
    <property type="match status" value="1"/>
</dbReference>
<proteinExistence type="inferred from homology"/>
<keyword id="KW-1015">Disulfide bond</keyword>
<keyword id="KW-0325">Glycoprotein</keyword>
<keyword id="KW-0336">GPI-anchor</keyword>
<keyword id="KW-1032">Host cell membrane</keyword>
<keyword id="KW-1043">Host membrane</keyword>
<keyword id="KW-0449">Lipoprotein</keyword>
<keyword id="KW-0472">Membrane</keyword>
<keyword id="KW-1185">Reference proteome</keyword>
<keyword id="KW-0732">Signal</keyword>
<organismHost>
    <name type="scientific">Saimiri sciureus</name>
    <name type="common">Common squirrel monkey</name>
    <dbReference type="NCBI Taxonomy" id="9521"/>
</organismHost>
<feature type="signal peptide" evidence="2">
    <location>
        <begin position="1"/>
        <end position="19"/>
    </location>
</feature>
<feature type="chain" id="PRO_0000036128" description="Surface glycoprotein CD59 homolog">
    <location>
        <begin position="20"/>
        <end position="96"/>
    </location>
</feature>
<feature type="propeptide" id="PRO_0000036129" description="Removed in mature form" evidence="2">
    <location>
        <begin position="97"/>
        <end position="121"/>
    </location>
</feature>
<feature type="domain" description="UPAR/Ly6">
    <location>
        <begin position="20"/>
        <end position="104"/>
    </location>
</feature>
<feature type="lipid moiety-binding region" description="GPI-anchor amidated asparagine; by host" evidence="2">
    <location>
        <position position="96"/>
    </location>
</feature>
<feature type="glycosylation site" description="N-linked (GlcNAc...) asparagine; by host" evidence="2">
    <location>
        <position position="24"/>
    </location>
</feature>
<feature type="disulfide bond" evidence="1">
    <location>
        <begin position="22"/>
        <end position="45"/>
    </location>
</feature>
<feature type="disulfide bond" evidence="1">
    <location>
        <begin position="25"/>
        <end position="32"/>
    </location>
</feature>
<feature type="disulfide bond" evidence="1">
    <location>
        <begin position="38"/>
        <end position="58"/>
    </location>
</feature>
<feature type="disulfide bond" evidence="1">
    <location>
        <begin position="64"/>
        <end position="82"/>
    </location>
</feature>
<feature type="disulfide bond" evidence="1">
    <location>
        <begin position="83"/>
        <end position="88"/>
    </location>
</feature>
<gene>
    <name type="primary">15</name>
</gene>
<sequence length="121" mass="13814">MYILFTLVLTFVFCKPIHSLQCYNCSHSTMQCTTSTSCTSNLDSCLIAKAGSGVYYRCWKFDDCSFKRISNQLSETQLKYHCCKKNLCNVNKGIENIKRTISDKALLLLALFLVTAWNFPL</sequence>
<name>CD59_SHV21</name>
<evidence type="ECO:0000250" key="1"/>
<evidence type="ECO:0000255" key="2"/>